<accession>P0CD45</accession>
<accession>Q2MIE2</accession>
<dbReference type="EC" id="7.1.1.-" evidence="1"/>
<dbReference type="EMBL" id="DQ347958">
    <property type="protein sequence ID" value="ABC56275.1"/>
    <property type="molecule type" value="Genomic_DNA"/>
</dbReference>
<dbReference type="SMR" id="P0CD45"/>
<dbReference type="GO" id="GO:0009535">
    <property type="term" value="C:chloroplast thylakoid membrane"/>
    <property type="evidence" value="ECO:0007669"/>
    <property type="project" value="UniProtKB-SubCell"/>
</dbReference>
<dbReference type="GO" id="GO:0008137">
    <property type="term" value="F:NADH dehydrogenase (ubiquinone) activity"/>
    <property type="evidence" value="ECO:0007669"/>
    <property type="project" value="InterPro"/>
</dbReference>
<dbReference type="GO" id="GO:0048038">
    <property type="term" value="F:quinone binding"/>
    <property type="evidence" value="ECO:0007669"/>
    <property type="project" value="UniProtKB-KW"/>
</dbReference>
<dbReference type="GO" id="GO:0042773">
    <property type="term" value="P:ATP synthesis coupled electron transport"/>
    <property type="evidence" value="ECO:0007669"/>
    <property type="project" value="InterPro"/>
</dbReference>
<dbReference type="GO" id="GO:0019684">
    <property type="term" value="P:photosynthesis, light reaction"/>
    <property type="evidence" value="ECO:0007669"/>
    <property type="project" value="UniProtKB-UniRule"/>
</dbReference>
<dbReference type="HAMAP" id="MF_00445">
    <property type="entry name" value="NDH1_NuoN_1"/>
    <property type="match status" value="1"/>
</dbReference>
<dbReference type="InterPro" id="IPR010096">
    <property type="entry name" value="NADH-Q_OxRdtase_suN/2"/>
</dbReference>
<dbReference type="InterPro" id="IPR001750">
    <property type="entry name" value="ND/Mrp_TM"/>
</dbReference>
<dbReference type="InterPro" id="IPR045693">
    <property type="entry name" value="Ndh2_N"/>
</dbReference>
<dbReference type="NCBIfam" id="TIGR01770">
    <property type="entry name" value="NDH_I_N"/>
    <property type="match status" value="1"/>
</dbReference>
<dbReference type="NCBIfam" id="NF002701">
    <property type="entry name" value="PRK02504.1"/>
    <property type="match status" value="1"/>
</dbReference>
<dbReference type="PANTHER" id="PTHR22773">
    <property type="entry name" value="NADH DEHYDROGENASE"/>
    <property type="match status" value="1"/>
</dbReference>
<dbReference type="Pfam" id="PF19530">
    <property type="entry name" value="Ndh2_N"/>
    <property type="match status" value="1"/>
</dbReference>
<dbReference type="Pfam" id="PF00361">
    <property type="entry name" value="Proton_antipo_M"/>
    <property type="match status" value="1"/>
</dbReference>
<dbReference type="PRINTS" id="PR01434">
    <property type="entry name" value="NADHDHGNASE5"/>
</dbReference>
<evidence type="ECO:0000255" key="1">
    <source>
        <dbReference type="HAMAP-Rule" id="MF_00445"/>
    </source>
</evidence>
<name>NU2C2_SOLBU</name>
<proteinExistence type="inferred from homology"/>
<feature type="chain" id="PRO_0000391310" description="NAD(P)H-quinone oxidoreductase subunit 2 B, chloroplastic">
    <location>
        <begin position="1"/>
        <end position="510"/>
    </location>
</feature>
<feature type="transmembrane region" description="Helical" evidence="1">
    <location>
        <begin position="24"/>
        <end position="44"/>
    </location>
</feature>
<feature type="transmembrane region" description="Helical" evidence="1">
    <location>
        <begin position="57"/>
        <end position="77"/>
    </location>
</feature>
<feature type="transmembrane region" description="Helical" evidence="1">
    <location>
        <begin position="99"/>
        <end position="119"/>
    </location>
</feature>
<feature type="transmembrane region" description="Helical" evidence="1">
    <location>
        <begin position="124"/>
        <end position="144"/>
    </location>
</feature>
<feature type="transmembrane region" description="Helical" evidence="1">
    <location>
        <begin position="149"/>
        <end position="169"/>
    </location>
</feature>
<feature type="transmembrane region" description="Helical" evidence="1">
    <location>
        <begin position="183"/>
        <end position="203"/>
    </location>
</feature>
<feature type="transmembrane region" description="Helical" evidence="1">
    <location>
        <begin position="227"/>
        <end position="247"/>
    </location>
</feature>
<feature type="transmembrane region" description="Helical" evidence="1">
    <location>
        <begin position="295"/>
        <end position="315"/>
    </location>
</feature>
<feature type="transmembrane region" description="Helical" evidence="1">
    <location>
        <begin position="323"/>
        <end position="343"/>
    </location>
</feature>
<feature type="transmembrane region" description="Helical" evidence="1">
    <location>
        <begin position="354"/>
        <end position="374"/>
    </location>
</feature>
<feature type="transmembrane region" description="Helical" evidence="1">
    <location>
        <begin position="395"/>
        <end position="415"/>
    </location>
</feature>
<feature type="transmembrane region" description="Helical" evidence="1">
    <location>
        <begin position="418"/>
        <end position="438"/>
    </location>
</feature>
<feature type="transmembrane region" description="Helical" evidence="1">
    <location>
        <begin position="484"/>
        <end position="504"/>
    </location>
</feature>
<keyword id="KW-0150">Chloroplast</keyword>
<keyword id="KW-0472">Membrane</keyword>
<keyword id="KW-0520">NAD</keyword>
<keyword id="KW-0521">NADP</keyword>
<keyword id="KW-0934">Plastid</keyword>
<keyword id="KW-0618">Plastoquinone</keyword>
<keyword id="KW-0874">Quinone</keyword>
<keyword id="KW-0793">Thylakoid</keyword>
<keyword id="KW-1278">Translocase</keyword>
<keyword id="KW-0812">Transmembrane</keyword>
<keyword id="KW-1133">Transmembrane helix</keyword>
<keyword id="KW-0813">Transport</keyword>
<protein>
    <recommendedName>
        <fullName evidence="1">NAD(P)H-quinone oxidoreductase subunit 2 B, chloroplastic</fullName>
        <ecNumber evidence="1">7.1.1.-</ecNumber>
    </recommendedName>
    <alternativeName>
        <fullName evidence="1">NAD(P)H dehydrogenase, subunit 2 B</fullName>
    </alternativeName>
    <alternativeName>
        <fullName evidence="1">NADH-plastoquinone oxidoreductase subunit 2 B</fullName>
    </alternativeName>
</protein>
<reference key="1">
    <citation type="journal article" date="2006" name="Theor. Appl. Genet.">
        <title>Complete chloroplast genome sequences of Solanum bulbocastanum, Solanum lycopersicum and comparative analyses with other Solanaceae genomes.</title>
        <authorList>
            <person name="Daniell H."/>
            <person name="Lee S.-B."/>
            <person name="Grevich J."/>
            <person name="Saski C."/>
            <person name="Quesada-Vargas T."/>
            <person name="Guda C."/>
            <person name="Tomkins J."/>
            <person name="Jansen R.K."/>
        </authorList>
    </citation>
    <scope>NUCLEOTIDE SEQUENCE [LARGE SCALE GENOMIC DNA]</scope>
    <source>
        <strain>cv. PT29</strain>
    </source>
</reference>
<sequence length="510" mass="56645">MIWHVQNENFILDSTRIFMKAFHLLLFDGSLIFPECILIFGLILLLMIDSTSDQKDIPWLYFISSTSLVMSITALLFRWREEPMISFSGNFQTNNFNEIFQFLILLCSTLCIPLSVEYIECTEMAITEFLLFVLTATLGGMFLCGANDLITIFVAPECFSLCSYLLSGYTKKDVRSNEATMKYLLMGGASSSILVHGFSWLYGSSGGEIELQEIVNGLINTQMYNSPGISIALIFITVGIGFKLSPAPSHQWTPDVYEGSPTPVVAFLSVTSKVAASASATRIFDIPFYFSSNEWHLLLEILAILSMILGNLIAITQTSMKRMLAYSSIGQIGYVIIGIIVGDSNDGYASMITYMLFYISMNLGTFACIVLFGLRTGTDNIRDYAGLYTKDPFLALSLALCLLSLGGLPPLAGFFGKLYLFWCGWQAGLYFLVLIGLLTSVVSIYYYLKIIKLLMTGRNQEITPHVRNYRRSPLRSNNSIELSMIVCVIASTIPGISMNPIIAIAQDSLF</sequence>
<gene>
    <name evidence="1" type="primary">ndhB2</name>
</gene>
<geneLocation type="chloroplast"/>
<organism>
    <name type="scientific">Solanum bulbocastanum</name>
    <name type="common">Wild potato</name>
    <dbReference type="NCBI Taxonomy" id="147425"/>
    <lineage>
        <taxon>Eukaryota</taxon>
        <taxon>Viridiplantae</taxon>
        <taxon>Streptophyta</taxon>
        <taxon>Embryophyta</taxon>
        <taxon>Tracheophyta</taxon>
        <taxon>Spermatophyta</taxon>
        <taxon>Magnoliopsida</taxon>
        <taxon>eudicotyledons</taxon>
        <taxon>Gunneridae</taxon>
        <taxon>Pentapetalae</taxon>
        <taxon>asterids</taxon>
        <taxon>lamiids</taxon>
        <taxon>Solanales</taxon>
        <taxon>Solanaceae</taxon>
        <taxon>Solanoideae</taxon>
        <taxon>Solaneae</taxon>
        <taxon>Solanum</taxon>
    </lineage>
</organism>
<comment type="function">
    <text evidence="1">NDH shuttles electrons from NAD(P)H:plastoquinone, via FMN and iron-sulfur (Fe-S) centers, to quinones in the photosynthetic chain and possibly in a chloroplast respiratory chain. The immediate electron acceptor for the enzyme in this species is believed to be plastoquinone. Couples the redox reaction to proton translocation, and thus conserves the redox energy in a proton gradient.</text>
</comment>
<comment type="catalytic activity">
    <reaction evidence="1">
        <text>a plastoquinone + NADH + (n+1) H(+)(in) = a plastoquinol + NAD(+) + n H(+)(out)</text>
        <dbReference type="Rhea" id="RHEA:42608"/>
        <dbReference type="Rhea" id="RHEA-COMP:9561"/>
        <dbReference type="Rhea" id="RHEA-COMP:9562"/>
        <dbReference type="ChEBI" id="CHEBI:15378"/>
        <dbReference type="ChEBI" id="CHEBI:17757"/>
        <dbReference type="ChEBI" id="CHEBI:57540"/>
        <dbReference type="ChEBI" id="CHEBI:57945"/>
        <dbReference type="ChEBI" id="CHEBI:62192"/>
    </reaction>
</comment>
<comment type="catalytic activity">
    <reaction evidence="1">
        <text>a plastoquinone + NADPH + (n+1) H(+)(in) = a plastoquinol + NADP(+) + n H(+)(out)</text>
        <dbReference type="Rhea" id="RHEA:42612"/>
        <dbReference type="Rhea" id="RHEA-COMP:9561"/>
        <dbReference type="Rhea" id="RHEA-COMP:9562"/>
        <dbReference type="ChEBI" id="CHEBI:15378"/>
        <dbReference type="ChEBI" id="CHEBI:17757"/>
        <dbReference type="ChEBI" id="CHEBI:57783"/>
        <dbReference type="ChEBI" id="CHEBI:58349"/>
        <dbReference type="ChEBI" id="CHEBI:62192"/>
    </reaction>
</comment>
<comment type="subunit">
    <text evidence="1">NDH is composed of at least 16 different subunits, 5 of which are encoded in the nucleus.</text>
</comment>
<comment type="subcellular location">
    <subcellularLocation>
        <location evidence="1">Plastid</location>
        <location evidence="1">Chloroplast thylakoid membrane</location>
        <topology evidence="1">Multi-pass membrane protein</topology>
    </subcellularLocation>
</comment>
<comment type="similarity">
    <text evidence="1">Belongs to the complex I subunit 2 family.</text>
</comment>